<reference key="1">
    <citation type="submission" date="2008-01" db="EMBL/GenBank/DDBJ databases">
        <title>Complete sequence of Pseudomonas putida GB-1.</title>
        <authorList>
            <consortium name="US DOE Joint Genome Institute"/>
            <person name="Copeland A."/>
            <person name="Lucas S."/>
            <person name="Lapidus A."/>
            <person name="Barry K."/>
            <person name="Glavina del Rio T."/>
            <person name="Dalin E."/>
            <person name="Tice H."/>
            <person name="Pitluck S."/>
            <person name="Bruce D."/>
            <person name="Goodwin L."/>
            <person name="Chertkov O."/>
            <person name="Brettin T."/>
            <person name="Detter J.C."/>
            <person name="Han C."/>
            <person name="Kuske C.R."/>
            <person name="Schmutz J."/>
            <person name="Larimer F."/>
            <person name="Land M."/>
            <person name="Hauser L."/>
            <person name="Kyrpides N."/>
            <person name="Kim E."/>
            <person name="McCarthy J.K."/>
            <person name="Richardson P."/>
        </authorList>
    </citation>
    <scope>NUCLEOTIDE SEQUENCE [LARGE SCALE GENOMIC DNA]</scope>
    <source>
        <strain>GB-1</strain>
    </source>
</reference>
<protein>
    <recommendedName>
        <fullName evidence="1">DNA replication and repair protein RecF</fullName>
    </recommendedName>
</protein>
<feature type="chain" id="PRO_1000079596" description="DNA replication and repair protein RecF">
    <location>
        <begin position="1"/>
        <end position="367"/>
    </location>
</feature>
<feature type="binding site" evidence="1">
    <location>
        <begin position="30"/>
        <end position="37"/>
    </location>
    <ligand>
        <name>ATP</name>
        <dbReference type="ChEBI" id="CHEBI:30616"/>
    </ligand>
</feature>
<sequence>MSLRRIMVTAVRNLHPVTLLPSPRINILYGANGSGKTSVLEAVHLLGLARSFRSSRLNPVIQYEQPACTVFGEVELTEGGTCKLGVSRERQGEFTIRIDGQNARSAAQLAELLPLQLINPDSFRLLEGAPKIRRQFLDWGVFHVEPRFLPAWQRLQKALRQRNSWLRHGTLDPASQAAWDRELCLASAEIDEYRRNYIKALKPVFERTLSELVELDGLTLSYYRGWDKDRELQEVLASSLLRDQQMGHTQAGPQRADLRLRLAGNNAADILSRGQQKLVVCALRIAQGHLVSQARRGHCIYLVDDLPSELDDQHRRALCRLLEELRCQVFITCVDHELLREGWQTETPVALFHVEQGRITQTHDHRE</sequence>
<accession>B0KEV1</accession>
<proteinExistence type="inferred from homology"/>
<dbReference type="EMBL" id="CP000926">
    <property type="protein sequence ID" value="ABY95921.1"/>
    <property type="molecule type" value="Genomic_DNA"/>
</dbReference>
<dbReference type="RefSeq" id="WP_012269843.1">
    <property type="nucleotide sequence ID" value="NC_010322.1"/>
</dbReference>
<dbReference type="SMR" id="B0KEV1"/>
<dbReference type="KEGG" id="ppg:PputGB1_0005"/>
<dbReference type="eggNOG" id="COG1195">
    <property type="taxonomic scope" value="Bacteria"/>
</dbReference>
<dbReference type="HOGENOM" id="CLU_040267_0_0_6"/>
<dbReference type="Proteomes" id="UP000002157">
    <property type="component" value="Chromosome"/>
</dbReference>
<dbReference type="GO" id="GO:0005737">
    <property type="term" value="C:cytoplasm"/>
    <property type="evidence" value="ECO:0007669"/>
    <property type="project" value="UniProtKB-SubCell"/>
</dbReference>
<dbReference type="GO" id="GO:0005524">
    <property type="term" value="F:ATP binding"/>
    <property type="evidence" value="ECO:0007669"/>
    <property type="project" value="UniProtKB-UniRule"/>
</dbReference>
<dbReference type="GO" id="GO:0003697">
    <property type="term" value="F:single-stranded DNA binding"/>
    <property type="evidence" value="ECO:0007669"/>
    <property type="project" value="UniProtKB-UniRule"/>
</dbReference>
<dbReference type="GO" id="GO:0006260">
    <property type="term" value="P:DNA replication"/>
    <property type="evidence" value="ECO:0007669"/>
    <property type="project" value="UniProtKB-UniRule"/>
</dbReference>
<dbReference type="GO" id="GO:0000731">
    <property type="term" value="P:DNA synthesis involved in DNA repair"/>
    <property type="evidence" value="ECO:0007669"/>
    <property type="project" value="TreeGrafter"/>
</dbReference>
<dbReference type="GO" id="GO:0006302">
    <property type="term" value="P:double-strand break repair"/>
    <property type="evidence" value="ECO:0007669"/>
    <property type="project" value="TreeGrafter"/>
</dbReference>
<dbReference type="GO" id="GO:0009432">
    <property type="term" value="P:SOS response"/>
    <property type="evidence" value="ECO:0007669"/>
    <property type="project" value="UniProtKB-UniRule"/>
</dbReference>
<dbReference type="FunFam" id="1.20.1050.90:FF:000003">
    <property type="entry name" value="DNA replication and repair protein RecF"/>
    <property type="match status" value="1"/>
</dbReference>
<dbReference type="Gene3D" id="3.40.50.300">
    <property type="entry name" value="P-loop containing nucleotide triphosphate hydrolases"/>
    <property type="match status" value="1"/>
</dbReference>
<dbReference type="Gene3D" id="1.20.1050.90">
    <property type="entry name" value="RecF/RecN/SMC, N-terminal domain"/>
    <property type="match status" value="1"/>
</dbReference>
<dbReference type="HAMAP" id="MF_00365">
    <property type="entry name" value="RecF"/>
    <property type="match status" value="1"/>
</dbReference>
<dbReference type="InterPro" id="IPR001238">
    <property type="entry name" value="DNA-binding_RecF"/>
</dbReference>
<dbReference type="InterPro" id="IPR018078">
    <property type="entry name" value="DNA-binding_RecF_CS"/>
</dbReference>
<dbReference type="InterPro" id="IPR027417">
    <property type="entry name" value="P-loop_NTPase"/>
</dbReference>
<dbReference type="InterPro" id="IPR003395">
    <property type="entry name" value="RecF/RecN/SMC_N"/>
</dbReference>
<dbReference type="InterPro" id="IPR042174">
    <property type="entry name" value="RecF_2"/>
</dbReference>
<dbReference type="NCBIfam" id="TIGR00611">
    <property type="entry name" value="recf"/>
    <property type="match status" value="1"/>
</dbReference>
<dbReference type="PANTHER" id="PTHR32182">
    <property type="entry name" value="DNA REPLICATION AND REPAIR PROTEIN RECF"/>
    <property type="match status" value="1"/>
</dbReference>
<dbReference type="PANTHER" id="PTHR32182:SF0">
    <property type="entry name" value="DNA REPLICATION AND REPAIR PROTEIN RECF"/>
    <property type="match status" value="1"/>
</dbReference>
<dbReference type="Pfam" id="PF02463">
    <property type="entry name" value="SMC_N"/>
    <property type="match status" value="1"/>
</dbReference>
<dbReference type="SUPFAM" id="SSF52540">
    <property type="entry name" value="P-loop containing nucleoside triphosphate hydrolases"/>
    <property type="match status" value="1"/>
</dbReference>
<dbReference type="PROSITE" id="PS00617">
    <property type="entry name" value="RECF_1"/>
    <property type="match status" value="1"/>
</dbReference>
<dbReference type="PROSITE" id="PS00618">
    <property type="entry name" value="RECF_2"/>
    <property type="match status" value="1"/>
</dbReference>
<evidence type="ECO:0000255" key="1">
    <source>
        <dbReference type="HAMAP-Rule" id="MF_00365"/>
    </source>
</evidence>
<name>RECF_PSEPG</name>
<keyword id="KW-0067">ATP-binding</keyword>
<keyword id="KW-0963">Cytoplasm</keyword>
<keyword id="KW-0227">DNA damage</keyword>
<keyword id="KW-0234">DNA repair</keyword>
<keyword id="KW-0235">DNA replication</keyword>
<keyword id="KW-0238">DNA-binding</keyword>
<keyword id="KW-0547">Nucleotide-binding</keyword>
<keyword id="KW-0742">SOS response</keyword>
<comment type="function">
    <text evidence="1">The RecF protein is involved in DNA metabolism; it is required for DNA replication and normal SOS inducibility. RecF binds preferentially to single-stranded, linear DNA. It also seems to bind ATP.</text>
</comment>
<comment type="subcellular location">
    <subcellularLocation>
        <location evidence="1">Cytoplasm</location>
    </subcellularLocation>
</comment>
<comment type="similarity">
    <text evidence="1">Belongs to the RecF family.</text>
</comment>
<gene>
    <name evidence="1" type="primary">recF</name>
    <name type="ordered locus">PputGB1_0005</name>
</gene>
<organism>
    <name type="scientific">Pseudomonas putida (strain GB-1)</name>
    <dbReference type="NCBI Taxonomy" id="76869"/>
    <lineage>
        <taxon>Bacteria</taxon>
        <taxon>Pseudomonadati</taxon>
        <taxon>Pseudomonadota</taxon>
        <taxon>Gammaproteobacteria</taxon>
        <taxon>Pseudomonadales</taxon>
        <taxon>Pseudomonadaceae</taxon>
        <taxon>Pseudomonas</taxon>
    </lineage>
</organism>